<feature type="chain" id="PRO_1000147687" description="Uronate isomerase">
    <location>
        <begin position="1"/>
        <end position="487"/>
    </location>
</feature>
<organism>
    <name type="scientific">Caulobacter vibrioides (strain NA1000 / CB15N)</name>
    <name type="common">Caulobacter crescentus</name>
    <dbReference type="NCBI Taxonomy" id="565050"/>
    <lineage>
        <taxon>Bacteria</taxon>
        <taxon>Pseudomonadati</taxon>
        <taxon>Pseudomonadota</taxon>
        <taxon>Alphaproteobacteria</taxon>
        <taxon>Caulobacterales</taxon>
        <taxon>Caulobacteraceae</taxon>
        <taxon>Caulobacter</taxon>
    </lineage>
</organism>
<reference key="1">
    <citation type="journal article" date="2010" name="J. Bacteriol.">
        <title>The genetic basis of laboratory adaptation in Caulobacter crescentus.</title>
        <authorList>
            <person name="Marks M.E."/>
            <person name="Castro-Rojas C.M."/>
            <person name="Teiling C."/>
            <person name="Du L."/>
            <person name="Kapatral V."/>
            <person name="Walunas T.L."/>
            <person name="Crosson S."/>
        </authorList>
    </citation>
    <scope>NUCLEOTIDE SEQUENCE [LARGE SCALE GENOMIC DNA]</scope>
    <source>
        <strain>NA1000 / CB15N</strain>
    </source>
</reference>
<sequence length="487" mass="55052">MARPLSFHEDRLFPSDPATRSYARGLYALVKDLPIISPHGHTDPSWFATNAPFQDATDLLLAPDHYLFRMLYSQGVSLDALKVRSKAGVPDTDPREAWRVFASHFYLFRGTPSWVWLNHVFSQVFGFTEFLEASNADDYFDRITAALATDAFRPRALFDRFNIETLATTEGPHESLQHHAAIRESGWGGHVITAYRPDAVIDFEDERSPRAFERFAETSGQDVYSWKSYLEAHRLRRQAFIDAGATSSDHGHPTAATADLSDVEAEALFNSLVKGDVTPEKAELFRAQMLTEMAKMSLDDGLVMQIHPGSHRNHNVGLLNSHGRDKGADIPMRTEYVDALKPLLTRLGNDPRLSIILFTLDETTYSRELAPLAGHYPVLKLGPSWWFHDSPEGMMRFREQVTETAGFYNTVGFNDDTRAFLSIPARHDVARRVDSAFLARMVAEHRMDLVEAEELIVDLTYNLPKKAYKLDQRPDWARPATLRAAAE</sequence>
<accession>B8H5V4</accession>
<proteinExistence type="inferred from homology"/>
<keyword id="KW-0413">Isomerase</keyword>
<keyword id="KW-1185">Reference proteome</keyword>
<comment type="catalytic activity">
    <reaction evidence="1">
        <text>D-glucuronate = D-fructuronate</text>
        <dbReference type="Rhea" id="RHEA:13049"/>
        <dbReference type="ChEBI" id="CHEBI:58720"/>
        <dbReference type="ChEBI" id="CHEBI:59863"/>
        <dbReference type="EC" id="5.3.1.12"/>
    </reaction>
</comment>
<comment type="catalytic activity">
    <reaction evidence="1">
        <text>aldehydo-D-galacturonate = keto-D-tagaturonate</text>
        <dbReference type="Rhea" id="RHEA:27702"/>
        <dbReference type="ChEBI" id="CHEBI:12952"/>
        <dbReference type="ChEBI" id="CHEBI:17886"/>
        <dbReference type="EC" id="5.3.1.12"/>
    </reaction>
</comment>
<comment type="pathway">
    <text evidence="1">Carbohydrate metabolism; pentose and glucuronate interconversion.</text>
</comment>
<comment type="similarity">
    <text evidence="1">Belongs to the metallo-dependent hydrolases superfamily. Uronate isomerase family.</text>
</comment>
<dbReference type="EC" id="5.3.1.12" evidence="1"/>
<dbReference type="EMBL" id="CP001340">
    <property type="protein sequence ID" value="ACL95022.1"/>
    <property type="molecule type" value="Genomic_DNA"/>
</dbReference>
<dbReference type="RefSeq" id="WP_010919364.1">
    <property type="nucleotide sequence ID" value="NC_011916.1"/>
</dbReference>
<dbReference type="RefSeq" id="YP_002516930.1">
    <property type="nucleotide sequence ID" value="NC_011916.1"/>
</dbReference>
<dbReference type="SMR" id="B8H5V4"/>
<dbReference type="GeneID" id="7333232"/>
<dbReference type="KEGG" id="ccs:CCNA_01557"/>
<dbReference type="PATRIC" id="fig|565050.3.peg.1536"/>
<dbReference type="HOGENOM" id="CLU_044465_0_0_5"/>
<dbReference type="OrthoDB" id="9766564at2"/>
<dbReference type="PhylomeDB" id="B8H5V4"/>
<dbReference type="UniPathway" id="UPA00246"/>
<dbReference type="Proteomes" id="UP000001364">
    <property type="component" value="Chromosome"/>
</dbReference>
<dbReference type="GO" id="GO:0008880">
    <property type="term" value="F:glucuronate isomerase activity"/>
    <property type="evidence" value="ECO:0007669"/>
    <property type="project" value="UniProtKB-UniRule"/>
</dbReference>
<dbReference type="GO" id="GO:0019698">
    <property type="term" value="P:D-galacturonate catabolic process"/>
    <property type="evidence" value="ECO:0007669"/>
    <property type="project" value="TreeGrafter"/>
</dbReference>
<dbReference type="GO" id="GO:0042840">
    <property type="term" value="P:D-glucuronate catabolic process"/>
    <property type="evidence" value="ECO:0007669"/>
    <property type="project" value="TreeGrafter"/>
</dbReference>
<dbReference type="Gene3D" id="3.20.20.140">
    <property type="entry name" value="Metal-dependent hydrolases"/>
    <property type="match status" value="1"/>
</dbReference>
<dbReference type="Gene3D" id="1.10.2020.10">
    <property type="entry name" value="uronate isomerase, domain 2, chain A"/>
    <property type="match status" value="1"/>
</dbReference>
<dbReference type="HAMAP" id="MF_00675">
    <property type="entry name" value="UxaC"/>
    <property type="match status" value="1"/>
</dbReference>
<dbReference type="InterPro" id="IPR032466">
    <property type="entry name" value="Metal_Hydrolase"/>
</dbReference>
<dbReference type="InterPro" id="IPR003766">
    <property type="entry name" value="Uronate_isomerase"/>
</dbReference>
<dbReference type="NCBIfam" id="NF002794">
    <property type="entry name" value="PRK02925.1"/>
    <property type="match status" value="1"/>
</dbReference>
<dbReference type="PANTHER" id="PTHR30068">
    <property type="entry name" value="URONATE ISOMERASE"/>
    <property type="match status" value="1"/>
</dbReference>
<dbReference type="PANTHER" id="PTHR30068:SF4">
    <property type="entry name" value="URONATE ISOMERASE"/>
    <property type="match status" value="1"/>
</dbReference>
<dbReference type="Pfam" id="PF02614">
    <property type="entry name" value="UxaC"/>
    <property type="match status" value="1"/>
</dbReference>
<dbReference type="SUPFAM" id="SSF51556">
    <property type="entry name" value="Metallo-dependent hydrolases"/>
    <property type="match status" value="1"/>
</dbReference>
<protein>
    <recommendedName>
        <fullName evidence="1">Uronate isomerase</fullName>
        <ecNumber evidence="1">5.3.1.12</ecNumber>
    </recommendedName>
    <alternativeName>
        <fullName evidence="1">Glucuronate isomerase</fullName>
    </alternativeName>
    <alternativeName>
        <fullName evidence="1">Uronic isomerase</fullName>
    </alternativeName>
</protein>
<gene>
    <name evidence="1" type="primary">uxaC</name>
    <name type="ordered locus">CCNA_01557</name>
</gene>
<evidence type="ECO:0000255" key="1">
    <source>
        <dbReference type="HAMAP-Rule" id="MF_00675"/>
    </source>
</evidence>
<name>UXAC_CAUVN</name>